<proteinExistence type="evidence at transcript level"/>
<reference key="1">
    <citation type="journal article" date="1997" name="Proc. Natl. Acad. Sci. U.S.A.">
        <title>Double muscling in cattle due to mutations in the myostatin gene.</title>
        <authorList>
            <person name="McPherron A.C."/>
            <person name="Lee S.-J."/>
        </authorList>
    </citation>
    <scope>NUCLEOTIDE SEQUENCE [MRNA]</scope>
    <source>
        <tissue>Skeletal muscle</tissue>
    </source>
</reference>
<feature type="signal peptide" evidence="3">
    <location>
        <begin position="1"/>
        <end position="23"/>
    </location>
</feature>
<feature type="propeptide" id="PRO_0000033958" evidence="3">
    <location>
        <begin position="24"/>
        <end position="266"/>
    </location>
</feature>
<feature type="chain" id="PRO_0000033959" description="Growth/differentiation factor 8">
    <location>
        <begin position="267"/>
        <end position="375"/>
    </location>
</feature>
<feature type="site" description="Cleavage" evidence="1">
    <location>
        <begin position="98"/>
        <end position="99"/>
    </location>
</feature>
<feature type="glycosylation site" description="N-linked (GlcNAc...) asparagine" evidence="3">
    <location>
        <position position="71"/>
    </location>
</feature>
<feature type="disulfide bond" evidence="2">
    <location>
        <begin position="272"/>
        <end position="282"/>
    </location>
</feature>
<feature type="disulfide bond" evidence="2">
    <location>
        <begin position="281"/>
        <end position="340"/>
    </location>
</feature>
<feature type="disulfide bond" evidence="2">
    <location>
        <begin position="309"/>
        <end position="372"/>
    </location>
</feature>
<feature type="disulfide bond" evidence="2">
    <location>
        <begin position="313"/>
        <end position="374"/>
    </location>
</feature>
<feature type="disulfide bond" description="Interchain" evidence="2">
    <location>
        <position position="339"/>
    </location>
</feature>
<evidence type="ECO:0000250" key="1">
    <source>
        <dbReference type="UniProtKB" id="O08689"/>
    </source>
</evidence>
<evidence type="ECO:0000250" key="2">
    <source>
        <dbReference type="UniProtKB" id="O14793"/>
    </source>
</evidence>
<evidence type="ECO:0000255" key="3"/>
<evidence type="ECO:0000305" key="4"/>
<keyword id="KW-0165">Cleavage on pair of basic residues</keyword>
<keyword id="KW-0202">Cytokine</keyword>
<keyword id="KW-1015">Disulfide bond</keyword>
<keyword id="KW-0325">Glycoprotein</keyword>
<keyword id="KW-0339">Growth factor</keyword>
<keyword id="KW-0358">Heparin-binding</keyword>
<keyword id="KW-0964">Secreted</keyword>
<keyword id="KW-0732">Signal</keyword>
<gene>
    <name type="primary">MSTN</name>
    <name type="synonym">GDF8</name>
</gene>
<sequence>MQKLQLCVYIYLFMLIVAGPVDLNENSEQKENVEKEGLCNACTWRQNTKSSRIEAIKIQILSKLRLETAPNISKDAIRQLLPKAPPLRELIDQYDVQRDDSSDGSLEDDDYHATTETIITMPTESDFLMQVDGKPKCCFFKFSSKIQYNKVVKAQLWIYLRPVETPTTVFVQILRLIKPMKDGTRYTGIRSLKLDMNPGTGIWQSIDVKTVLQNWLKQPESNLGIEIKALDENGHDLAVTFPGPGEDGLNPFLEVKVTDTPKRSRRDFGLDCDEHSTESRCCRYPLTVDFEALGWDWIIAPKRYKANYCSGECEFVFLQKYPHTHLVHQANPRGSAGPCCTPTKMSPINMLYFNGKEQIIYGKIPAMVVDRCGCS</sequence>
<name>GDF8_PAPHA</name>
<accession>O18828</accession>
<organism>
    <name type="scientific">Papio hamadryas</name>
    <name type="common">Hamadryas baboon</name>
    <dbReference type="NCBI Taxonomy" id="9557"/>
    <lineage>
        <taxon>Eukaryota</taxon>
        <taxon>Metazoa</taxon>
        <taxon>Chordata</taxon>
        <taxon>Craniata</taxon>
        <taxon>Vertebrata</taxon>
        <taxon>Euteleostomi</taxon>
        <taxon>Mammalia</taxon>
        <taxon>Eutheria</taxon>
        <taxon>Euarchontoglires</taxon>
        <taxon>Primates</taxon>
        <taxon>Haplorrhini</taxon>
        <taxon>Catarrhini</taxon>
        <taxon>Cercopithecidae</taxon>
        <taxon>Cercopithecinae</taxon>
        <taxon>Papio</taxon>
    </lineage>
</organism>
<protein>
    <recommendedName>
        <fullName>Growth/differentiation factor 8</fullName>
        <shortName>GDF-8</shortName>
    </recommendedName>
    <alternativeName>
        <fullName>Myostatin</fullName>
    </alternativeName>
</protein>
<comment type="function">
    <text evidence="1">Acts specifically as a negative regulator of skeletal muscle growth.</text>
</comment>
<comment type="subunit">
    <text evidence="1">Homodimer; disulfide-linked. Interacts with WFIKKN2, leading to inhibit its activity. Interacts with FSTL3.</text>
</comment>
<comment type="subcellular location">
    <subcellularLocation>
        <location evidence="1">Secreted</location>
    </subcellularLocation>
</comment>
<comment type="PTM">
    <text evidence="1">Synthesized as large precursor molecule that undergoes proteolytic cleavage to generate an N-terminal propeptide and a disulfide linked C-terminal dimer, which is the biologically active molecule. The circulating form consists of a latent complex of the C-terminal dimer and other proteins, including its propeptide, which maintain the C-terminal dimer in a latent, inactive state. Ligand activation requires additional cleavage of the prodomain by a tolloid-like metalloproteinase.</text>
</comment>
<comment type="similarity">
    <text evidence="4">Belongs to the TGF-beta family.</text>
</comment>
<dbReference type="EMBL" id="AF019619">
    <property type="protein sequence ID" value="AAB86686.1"/>
    <property type="molecule type" value="mRNA"/>
</dbReference>
<dbReference type="SMR" id="O18828"/>
<dbReference type="GlyCosmos" id="O18828">
    <property type="glycosylation" value="1 site, No reported glycans"/>
</dbReference>
<dbReference type="GO" id="GO:0005615">
    <property type="term" value="C:extracellular space"/>
    <property type="evidence" value="ECO:0007669"/>
    <property type="project" value="UniProtKB-KW"/>
</dbReference>
<dbReference type="GO" id="GO:0005125">
    <property type="term" value="F:cytokine activity"/>
    <property type="evidence" value="ECO:0007669"/>
    <property type="project" value="UniProtKB-KW"/>
</dbReference>
<dbReference type="GO" id="GO:0008083">
    <property type="term" value="F:growth factor activity"/>
    <property type="evidence" value="ECO:0007669"/>
    <property type="project" value="UniProtKB-KW"/>
</dbReference>
<dbReference type="GO" id="GO:0008201">
    <property type="term" value="F:heparin binding"/>
    <property type="evidence" value="ECO:0007669"/>
    <property type="project" value="UniProtKB-KW"/>
</dbReference>
<dbReference type="GO" id="GO:0042802">
    <property type="term" value="F:identical protein binding"/>
    <property type="evidence" value="ECO:0000250"/>
    <property type="project" value="UniProtKB"/>
</dbReference>
<dbReference type="GO" id="GO:0014839">
    <property type="term" value="P:myoblast migration involved in skeletal muscle regeneration"/>
    <property type="evidence" value="ECO:0000250"/>
    <property type="project" value="UniProtKB"/>
</dbReference>
<dbReference type="GO" id="GO:2000818">
    <property type="term" value="P:negative regulation of myoblast proliferation"/>
    <property type="evidence" value="ECO:0000250"/>
    <property type="project" value="AgBase"/>
</dbReference>
<dbReference type="GO" id="GO:1902725">
    <property type="term" value="P:negative regulation of satellite cell differentiation"/>
    <property type="evidence" value="ECO:0000250"/>
    <property type="project" value="AgBase"/>
</dbReference>
<dbReference type="GO" id="GO:1902723">
    <property type="term" value="P:negative regulation of skeletal muscle satellite cell proliferation"/>
    <property type="evidence" value="ECO:0000250"/>
    <property type="project" value="AgBase"/>
</dbReference>
<dbReference type="GO" id="GO:0010592">
    <property type="term" value="P:positive regulation of lamellipodium assembly"/>
    <property type="evidence" value="ECO:0000250"/>
    <property type="project" value="UniProtKB"/>
</dbReference>
<dbReference type="GO" id="GO:0010759">
    <property type="term" value="P:positive regulation of macrophage chemotaxis"/>
    <property type="evidence" value="ECO:0000250"/>
    <property type="project" value="UniProtKB"/>
</dbReference>
<dbReference type="CDD" id="cd19388">
    <property type="entry name" value="TGF_beta_GDF8"/>
    <property type="match status" value="1"/>
</dbReference>
<dbReference type="FunFam" id="2.60.120.970:FF:000001">
    <property type="entry name" value="Growth/differentiation factor 8"/>
    <property type="match status" value="1"/>
</dbReference>
<dbReference type="FunFam" id="2.10.90.10:FF:000006">
    <property type="entry name" value="growth/differentiation factor 8"/>
    <property type="match status" value="1"/>
</dbReference>
<dbReference type="Gene3D" id="2.60.120.970">
    <property type="match status" value="1"/>
</dbReference>
<dbReference type="Gene3D" id="2.10.90.10">
    <property type="entry name" value="Cystine-knot cytokines"/>
    <property type="match status" value="1"/>
</dbReference>
<dbReference type="InterPro" id="IPR029034">
    <property type="entry name" value="Cystine-knot_cytokine"/>
</dbReference>
<dbReference type="InterPro" id="IPR001839">
    <property type="entry name" value="TGF-b_C"/>
</dbReference>
<dbReference type="InterPro" id="IPR001111">
    <property type="entry name" value="TGF-b_propeptide"/>
</dbReference>
<dbReference type="InterPro" id="IPR015615">
    <property type="entry name" value="TGF-beta-rel"/>
</dbReference>
<dbReference type="InterPro" id="IPR017948">
    <property type="entry name" value="TGFb_CS"/>
</dbReference>
<dbReference type="PANTHER" id="PTHR11848:SF150">
    <property type="entry name" value="GROWTH_DIFFERENTIATION FACTOR 8"/>
    <property type="match status" value="1"/>
</dbReference>
<dbReference type="PANTHER" id="PTHR11848">
    <property type="entry name" value="TGF-BETA FAMILY"/>
    <property type="match status" value="1"/>
</dbReference>
<dbReference type="Pfam" id="PF00019">
    <property type="entry name" value="TGF_beta"/>
    <property type="match status" value="1"/>
</dbReference>
<dbReference type="Pfam" id="PF00688">
    <property type="entry name" value="TGFb_propeptide"/>
    <property type="match status" value="1"/>
</dbReference>
<dbReference type="SMART" id="SM00204">
    <property type="entry name" value="TGFB"/>
    <property type="match status" value="1"/>
</dbReference>
<dbReference type="SUPFAM" id="SSF57501">
    <property type="entry name" value="Cystine-knot cytokines"/>
    <property type="match status" value="1"/>
</dbReference>
<dbReference type="PROSITE" id="PS00250">
    <property type="entry name" value="TGF_BETA_1"/>
    <property type="match status" value="1"/>
</dbReference>
<dbReference type="PROSITE" id="PS51362">
    <property type="entry name" value="TGF_BETA_2"/>
    <property type="match status" value="1"/>
</dbReference>